<sequence>MTSHLKKVELHCHLEGAASPALTEAQARKYGIDISGQLRDGVYIWHDFASFLECYDKVSEVYRTEEDYALLTETYLDELAGINTIYSELIVSPDHGKRIGLGADAYISGVCEGIRRAKAKSGIEARLIVTGERHFGPESVIGAAEYAAKAGNPLITGFNLAGEERMGRVADYIRAFDIARDAGLGLTIHAGEVCGAFSVADALDAVRPARIGHGVRAIEDLDLVKRLADLGTVLEVCPGSNIALRVYPDFASHPLRRLKEAGVRVTISSDDPPFFHTSLEREYALAAEAFGFGDAEIDAMTRVAIEAAFVDEETRKALLARL</sequence>
<gene>
    <name type="ordered locus">RHE_CH00197</name>
</gene>
<dbReference type="EC" id="3.5.4.2" evidence="1"/>
<dbReference type="EMBL" id="CP000133">
    <property type="protein sequence ID" value="ABC89021.1"/>
    <property type="molecule type" value="Genomic_DNA"/>
</dbReference>
<dbReference type="RefSeq" id="WP_011423590.1">
    <property type="nucleotide sequence ID" value="NC_007761.1"/>
</dbReference>
<dbReference type="SMR" id="Q2KDR5"/>
<dbReference type="KEGG" id="ret:RHE_CH00197"/>
<dbReference type="eggNOG" id="COG1816">
    <property type="taxonomic scope" value="Bacteria"/>
</dbReference>
<dbReference type="HOGENOM" id="CLU_039228_7_1_5"/>
<dbReference type="OrthoDB" id="105475at2"/>
<dbReference type="Proteomes" id="UP000001936">
    <property type="component" value="Chromosome"/>
</dbReference>
<dbReference type="GO" id="GO:0000034">
    <property type="term" value="F:adenine deaminase activity"/>
    <property type="evidence" value="ECO:0007669"/>
    <property type="project" value="UniProtKB-UniRule"/>
</dbReference>
<dbReference type="GO" id="GO:0008270">
    <property type="term" value="F:zinc ion binding"/>
    <property type="evidence" value="ECO:0007669"/>
    <property type="project" value="UniProtKB-UniRule"/>
</dbReference>
<dbReference type="GO" id="GO:0006146">
    <property type="term" value="P:adenine catabolic process"/>
    <property type="evidence" value="ECO:0007669"/>
    <property type="project" value="UniProtKB-UniRule"/>
</dbReference>
<dbReference type="GO" id="GO:0043103">
    <property type="term" value="P:hypoxanthine salvage"/>
    <property type="evidence" value="ECO:0007669"/>
    <property type="project" value="UniProtKB-UniRule"/>
</dbReference>
<dbReference type="GO" id="GO:0009117">
    <property type="term" value="P:nucleotide metabolic process"/>
    <property type="evidence" value="ECO:0007669"/>
    <property type="project" value="UniProtKB-KW"/>
</dbReference>
<dbReference type="CDD" id="cd01320">
    <property type="entry name" value="ADA"/>
    <property type="match status" value="1"/>
</dbReference>
<dbReference type="Gene3D" id="3.20.20.140">
    <property type="entry name" value="Metal-dependent hydrolases"/>
    <property type="match status" value="1"/>
</dbReference>
<dbReference type="HAMAP" id="MF_01962">
    <property type="entry name" value="Adenine_deaminase"/>
    <property type="match status" value="1"/>
</dbReference>
<dbReference type="InterPro" id="IPR001365">
    <property type="entry name" value="A_deaminase_dom"/>
</dbReference>
<dbReference type="InterPro" id="IPR028892">
    <property type="entry name" value="ADE"/>
</dbReference>
<dbReference type="InterPro" id="IPR006330">
    <property type="entry name" value="Ado/ade_deaminase"/>
</dbReference>
<dbReference type="InterPro" id="IPR032466">
    <property type="entry name" value="Metal_Hydrolase"/>
</dbReference>
<dbReference type="NCBIfam" id="TIGR01430">
    <property type="entry name" value="aden_deam"/>
    <property type="match status" value="1"/>
</dbReference>
<dbReference type="NCBIfam" id="NF006848">
    <property type="entry name" value="PRK09358.1-3"/>
    <property type="match status" value="1"/>
</dbReference>
<dbReference type="PANTHER" id="PTHR43114">
    <property type="entry name" value="ADENINE DEAMINASE"/>
    <property type="match status" value="1"/>
</dbReference>
<dbReference type="PANTHER" id="PTHR43114:SF6">
    <property type="entry name" value="ADENINE DEAMINASE"/>
    <property type="match status" value="1"/>
</dbReference>
<dbReference type="Pfam" id="PF00962">
    <property type="entry name" value="A_deaminase"/>
    <property type="match status" value="1"/>
</dbReference>
<dbReference type="SUPFAM" id="SSF51556">
    <property type="entry name" value="Metallo-dependent hydrolases"/>
    <property type="match status" value="1"/>
</dbReference>
<protein>
    <recommendedName>
        <fullName evidence="1">Adenine deaminase</fullName>
        <shortName evidence="1">ADE</shortName>
        <ecNumber evidence="1">3.5.4.2</ecNumber>
    </recommendedName>
    <alternativeName>
        <fullName evidence="1">Adenine aminohydrolase</fullName>
        <shortName evidence="1">AAH</shortName>
    </alternativeName>
</protein>
<name>ADE_RHIEC</name>
<comment type="function">
    <text evidence="1">Catalyzes the hydrolytic deamination of adenine to hypoxanthine. Plays an important role in the purine salvage pathway and in nitrogen catabolism.</text>
</comment>
<comment type="catalytic activity">
    <reaction evidence="1">
        <text>adenine + H2O + H(+) = hypoxanthine + NH4(+)</text>
        <dbReference type="Rhea" id="RHEA:23688"/>
        <dbReference type="ChEBI" id="CHEBI:15377"/>
        <dbReference type="ChEBI" id="CHEBI:15378"/>
        <dbReference type="ChEBI" id="CHEBI:16708"/>
        <dbReference type="ChEBI" id="CHEBI:17368"/>
        <dbReference type="ChEBI" id="CHEBI:28938"/>
        <dbReference type="EC" id="3.5.4.2"/>
    </reaction>
</comment>
<comment type="cofactor">
    <cofactor evidence="1">
        <name>Zn(2+)</name>
        <dbReference type="ChEBI" id="CHEBI:29105"/>
    </cofactor>
    <text evidence="1">Binds 1 zinc ion per subunit.</text>
</comment>
<comment type="similarity">
    <text evidence="1">Belongs to the metallo-dependent hydrolases superfamily. Adenosine and AMP deaminases family. Adenine deaminase type 2 subfamily.</text>
</comment>
<feature type="chain" id="PRO_1000017690" description="Adenine deaminase">
    <location>
        <begin position="1"/>
        <end position="322"/>
    </location>
</feature>
<feature type="active site" description="Proton donor" evidence="1">
    <location>
        <position position="192"/>
    </location>
</feature>
<feature type="binding site" evidence="1">
    <location>
        <position position="11"/>
    </location>
    <ligand>
        <name>Zn(2+)</name>
        <dbReference type="ChEBI" id="CHEBI:29105"/>
        <note>catalytic</note>
    </ligand>
</feature>
<feature type="binding site" evidence="1">
    <location>
        <position position="13"/>
    </location>
    <ligand>
        <name>Zn(2+)</name>
        <dbReference type="ChEBI" id="CHEBI:29105"/>
        <note>catalytic</note>
    </ligand>
</feature>
<feature type="binding site" evidence="1">
    <location>
        <position position="189"/>
    </location>
    <ligand>
        <name>Zn(2+)</name>
        <dbReference type="ChEBI" id="CHEBI:29105"/>
        <note>catalytic</note>
    </ligand>
</feature>
<feature type="binding site" evidence="1">
    <location>
        <position position="270"/>
    </location>
    <ligand>
        <name>Zn(2+)</name>
        <dbReference type="ChEBI" id="CHEBI:29105"/>
        <note>catalytic</note>
    </ligand>
</feature>
<feature type="binding site" evidence="1">
    <location>
        <position position="271"/>
    </location>
    <ligand>
        <name>substrate</name>
    </ligand>
</feature>
<feature type="site" description="Important for catalytic activity" evidence="1">
    <location>
        <position position="213"/>
    </location>
</feature>
<keyword id="KW-0378">Hydrolase</keyword>
<keyword id="KW-0479">Metal-binding</keyword>
<keyword id="KW-0546">Nucleotide metabolism</keyword>
<keyword id="KW-1185">Reference proteome</keyword>
<keyword id="KW-0862">Zinc</keyword>
<reference key="1">
    <citation type="journal article" date="2006" name="Proc. Natl. Acad. Sci. U.S.A.">
        <title>The partitioned Rhizobium etli genome: genetic and metabolic redundancy in seven interacting replicons.</title>
        <authorList>
            <person name="Gonzalez V."/>
            <person name="Santamaria R.I."/>
            <person name="Bustos P."/>
            <person name="Hernandez-Gonzalez I."/>
            <person name="Medrano-Soto A."/>
            <person name="Moreno-Hagelsieb G."/>
            <person name="Janga S.C."/>
            <person name="Ramirez M.A."/>
            <person name="Jimenez-Jacinto V."/>
            <person name="Collado-Vides J."/>
            <person name="Davila G."/>
        </authorList>
    </citation>
    <scope>NUCLEOTIDE SEQUENCE [LARGE SCALE GENOMIC DNA]</scope>
    <source>
        <strain>ATCC 51251 / DSM 11541 / JCM 21823 / NBRC 15573 / CFN 42</strain>
    </source>
</reference>
<evidence type="ECO:0000255" key="1">
    <source>
        <dbReference type="HAMAP-Rule" id="MF_01962"/>
    </source>
</evidence>
<accession>Q2KDR5</accession>
<organism>
    <name type="scientific">Rhizobium etli (strain ATCC 51251 / DSM 11541 / JCM 21823 / NBRC 15573 / CFN 42)</name>
    <dbReference type="NCBI Taxonomy" id="347834"/>
    <lineage>
        <taxon>Bacteria</taxon>
        <taxon>Pseudomonadati</taxon>
        <taxon>Pseudomonadota</taxon>
        <taxon>Alphaproteobacteria</taxon>
        <taxon>Hyphomicrobiales</taxon>
        <taxon>Rhizobiaceae</taxon>
        <taxon>Rhizobium/Agrobacterium group</taxon>
        <taxon>Rhizobium</taxon>
    </lineage>
</organism>
<proteinExistence type="inferred from homology"/>